<reference key="1">
    <citation type="journal article" date="2009" name="PLoS Genet.">
        <title>Organised genome dynamics in the Escherichia coli species results in highly diverse adaptive paths.</title>
        <authorList>
            <person name="Touchon M."/>
            <person name="Hoede C."/>
            <person name="Tenaillon O."/>
            <person name="Barbe V."/>
            <person name="Baeriswyl S."/>
            <person name="Bidet P."/>
            <person name="Bingen E."/>
            <person name="Bonacorsi S."/>
            <person name="Bouchier C."/>
            <person name="Bouvet O."/>
            <person name="Calteau A."/>
            <person name="Chiapello H."/>
            <person name="Clermont O."/>
            <person name="Cruveiller S."/>
            <person name="Danchin A."/>
            <person name="Diard M."/>
            <person name="Dossat C."/>
            <person name="Karoui M.E."/>
            <person name="Frapy E."/>
            <person name="Garry L."/>
            <person name="Ghigo J.M."/>
            <person name="Gilles A.M."/>
            <person name="Johnson J."/>
            <person name="Le Bouguenec C."/>
            <person name="Lescat M."/>
            <person name="Mangenot S."/>
            <person name="Martinez-Jehanne V."/>
            <person name="Matic I."/>
            <person name="Nassif X."/>
            <person name="Oztas S."/>
            <person name="Petit M.A."/>
            <person name="Pichon C."/>
            <person name="Rouy Z."/>
            <person name="Ruf C.S."/>
            <person name="Schneider D."/>
            <person name="Tourret J."/>
            <person name="Vacherie B."/>
            <person name="Vallenet D."/>
            <person name="Medigue C."/>
            <person name="Rocha E.P.C."/>
            <person name="Denamur E."/>
        </authorList>
    </citation>
    <scope>NUCLEOTIDE SEQUENCE [LARGE SCALE GENOMIC DNA]</scope>
    <source>
        <strain>UMN026 / ExPEC</strain>
    </source>
</reference>
<keyword id="KW-0963">Cytoplasm</keyword>
<keyword id="KW-0227">DNA damage</keyword>
<keyword id="KW-0234">DNA repair</keyword>
<keyword id="KW-0255">Endonuclease</keyword>
<keyword id="KW-0378">Hydrolase</keyword>
<keyword id="KW-0540">Nuclease</keyword>
<accession>B7N763</accession>
<proteinExistence type="inferred from homology"/>
<organism>
    <name type="scientific">Escherichia coli O17:K52:H18 (strain UMN026 / ExPEC)</name>
    <dbReference type="NCBI Taxonomy" id="585056"/>
    <lineage>
        <taxon>Bacteria</taxon>
        <taxon>Pseudomonadati</taxon>
        <taxon>Pseudomonadota</taxon>
        <taxon>Gammaproteobacteria</taxon>
        <taxon>Enterobacterales</taxon>
        <taxon>Enterobacteriaceae</taxon>
        <taxon>Escherichia</taxon>
    </lineage>
</organism>
<sequence length="229" mass="25485">MSQPRPLLSPPETEEQLLAQAQQLSGYTLGELAALAGLVTPENLKRDKGWIGVLLEIWLGASAGSKPEQDFAGLGVELKTIPVDSLGRPLETTFVCVAPLTGNSGVTWETSHVRHKLKRVLWIPVEGERSIPLAQRRVGSPLLWSPNEEEDRQLREDWEELMDMIVLGQVERITARHGEYLQIRPKAANAKALTEAIGARGERILTLPRGFYLKKNFTSALLARHFLIQ</sequence>
<dbReference type="EMBL" id="CU928163">
    <property type="protein sequence ID" value="CAR14324.1"/>
    <property type="molecule type" value="Genomic_DNA"/>
</dbReference>
<dbReference type="RefSeq" id="WP_000082197.1">
    <property type="nucleotide sequence ID" value="NC_011751.1"/>
</dbReference>
<dbReference type="RefSeq" id="YP_002413844.1">
    <property type="nucleotide sequence ID" value="NC_011751.1"/>
</dbReference>
<dbReference type="SMR" id="B7N763"/>
<dbReference type="STRING" id="585056.ECUMN_3158"/>
<dbReference type="KEGG" id="eum:ECUMN_3158"/>
<dbReference type="PATRIC" id="fig|585056.7.peg.3340"/>
<dbReference type="HOGENOM" id="CLU_086669_0_0_6"/>
<dbReference type="Proteomes" id="UP000007097">
    <property type="component" value="Chromosome"/>
</dbReference>
<dbReference type="GO" id="GO:0005737">
    <property type="term" value="C:cytoplasm"/>
    <property type="evidence" value="ECO:0007669"/>
    <property type="project" value="UniProtKB-SubCell"/>
</dbReference>
<dbReference type="GO" id="GO:0003677">
    <property type="term" value="F:DNA binding"/>
    <property type="evidence" value="ECO:0007669"/>
    <property type="project" value="InterPro"/>
</dbReference>
<dbReference type="GO" id="GO:0004519">
    <property type="term" value="F:endonuclease activity"/>
    <property type="evidence" value="ECO:0007669"/>
    <property type="project" value="UniProtKB-UniRule"/>
</dbReference>
<dbReference type="GO" id="GO:0006304">
    <property type="term" value="P:DNA modification"/>
    <property type="evidence" value="ECO:0007669"/>
    <property type="project" value="InterPro"/>
</dbReference>
<dbReference type="GO" id="GO:0006298">
    <property type="term" value="P:mismatch repair"/>
    <property type="evidence" value="ECO:0007669"/>
    <property type="project" value="UniProtKB-UniRule"/>
</dbReference>
<dbReference type="CDD" id="cd00583">
    <property type="entry name" value="MutH-like"/>
    <property type="match status" value="1"/>
</dbReference>
<dbReference type="FunFam" id="3.40.600.10:FF:000001">
    <property type="entry name" value="DNA mismatch repair protein MutH"/>
    <property type="match status" value="1"/>
</dbReference>
<dbReference type="Gene3D" id="3.40.600.10">
    <property type="entry name" value="DNA mismatch repair MutH/Restriction endonuclease, type II"/>
    <property type="match status" value="1"/>
</dbReference>
<dbReference type="HAMAP" id="MF_00759">
    <property type="entry name" value="MutH"/>
    <property type="match status" value="1"/>
</dbReference>
<dbReference type="InterPro" id="IPR004230">
    <property type="entry name" value="DNA_mismatch_repair_MutH"/>
</dbReference>
<dbReference type="InterPro" id="IPR011337">
    <property type="entry name" value="DNA_rep_MutH/RE_typeII_Sau3AI"/>
</dbReference>
<dbReference type="InterPro" id="IPR037057">
    <property type="entry name" value="DNA_rep_MutH/T2_RE_sf"/>
</dbReference>
<dbReference type="InterPro" id="IPR011335">
    <property type="entry name" value="Restrct_endonuc-II-like"/>
</dbReference>
<dbReference type="NCBIfam" id="TIGR02248">
    <property type="entry name" value="mutH_TIGR"/>
    <property type="match status" value="1"/>
</dbReference>
<dbReference type="NCBIfam" id="NF003458">
    <property type="entry name" value="PRK05070.1"/>
    <property type="match status" value="1"/>
</dbReference>
<dbReference type="Pfam" id="PF02976">
    <property type="entry name" value="MutH"/>
    <property type="match status" value="1"/>
</dbReference>
<dbReference type="SMART" id="SM00927">
    <property type="entry name" value="MutH"/>
    <property type="match status" value="1"/>
</dbReference>
<dbReference type="SUPFAM" id="SSF52980">
    <property type="entry name" value="Restriction endonuclease-like"/>
    <property type="match status" value="1"/>
</dbReference>
<feature type="chain" id="PRO_1000133465" description="DNA mismatch repair protein MutH">
    <location>
        <begin position="1"/>
        <end position="229"/>
    </location>
</feature>
<gene>
    <name evidence="1" type="primary">mutH</name>
    <name type="ordered locus">ECUMN_3158</name>
</gene>
<name>MUTH_ECOLU</name>
<protein>
    <recommendedName>
        <fullName evidence="1">DNA mismatch repair protein MutH</fullName>
    </recommendedName>
    <alternativeName>
        <fullName evidence="1">Methyl-directed mismatch repair protein</fullName>
    </alternativeName>
</protein>
<evidence type="ECO:0000255" key="1">
    <source>
        <dbReference type="HAMAP-Rule" id="MF_00759"/>
    </source>
</evidence>
<comment type="function">
    <text evidence="1">Sequence-specific endonuclease that cleaves unmethylated GATC sequences. It is involved in DNA mismatch repair.</text>
</comment>
<comment type="subcellular location">
    <subcellularLocation>
        <location evidence="1">Cytoplasm</location>
    </subcellularLocation>
</comment>
<comment type="similarity">
    <text evidence="1">Belongs to the MutH family.</text>
</comment>